<accession>Q21E72</accession>
<evidence type="ECO:0000255" key="1">
    <source>
        <dbReference type="HAMAP-Rule" id="MF_01702"/>
    </source>
</evidence>
<feature type="chain" id="PRO_0000272519" description="Phosphate import ATP-binding protein PstB">
    <location>
        <begin position="1"/>
        <end position="293"/>
    </location>
</feature>
<feature type="domain" description="ABC transporter" evidence="1">
    <location>
        <begin position="46"/>
        <end position="288"/>
    </location>
</feature>
<feature type="binding site" evidence="1">
    <location>
        <begin position="78"/>
        <end position="85"/>
    </location>
    <ligand>
        <name>ATP</name>
        <dbReference type="ChEBI" id="CHEBI:30616"/>
    </ligand>
</feature>
<protein>
    <recommendedName>
        <fullName evidence="1">Phosphate import ATP-binding protein PstB</fullName>
        <ecNumber evidence="1">7.3.2.1</ecNumber>
    </recommendedName>
    <alternativeName>
        <fullName evidence="1">ABC phosphate transporter</fullName>
    </alternativeName>
    <alternativeName>
        <fullName evidence="1">Phosphate-transporting ATPase</fullName>
    </alternativeName>
</protein>
<proteinExistence type="inferred from homology"/>
<dbReference type="EC" id="7.3.2.1" evidence="1"/>
<dbReference type="EMBL" id="CP000282">
    <property type="protein sequence ID" value="ABD83007.1"/>
    <property type="molecule type" value="Genomic_DNA"/>
</dbReference>
<dbReference type="SMR" id="Q21E72"/>
<dbReference type="STRING" id="203122.Sde_3752"/>
<dbReference type="KEGG" id="sde:Sde_3752"/>
<dbReference type="eggNOG" id="COG1117">
    <property type="taxonomic scope" value="Bacteria"/>
</dbReference>
<dbReference type="HOGENOM" id="CLU_000604_1_22_6"/>
<dbReference type="OrthoDB" id="9802264at2"/>
<dbReference type="Proteomes" id="UP000001947">
    <property type="component" value="Chromosome"/>
</dbReference>
<dbReference type="GO" id="GO:0005886">
    <property type="term" value="C:plasma membrane"/>
    <property type="evidence" value="ECO:0007669"/>
    <property type="project" value="UniProtKB-SubCell"/>
</dbReference>
<dbReference type="GO" id="GO:0005524">
    <property type="term" value="F:ATP binding"/>
    <property type="evidence" value="ECO:0007669"/>
    <property type="project" value="UniProtKB-KW"/>
</dbReference>
<dbReference type="GO" id="GO:0016887">
    <property type="term" value="F:ATP hydrolysis activity"/>
    <property type="evidence" value="ECO:0007669"/>
    <property type="project" value="InterPro"/>
</dbReference>
<dbReference type="GO" id="GO:0015415">
    <property type="term" value="F:ATPase-coupled phosphate ion transmembrane transporter activity"/>
    <property type="evidence" value="ECO:0007669"/>
    <property type="project" value="UniProtKB-EC"/>
</dbReference>
<dbReference type="GO" id="GO:0035435">
    <property type="term" value="P:phosphate ion transmembrane transport"/>
    <property type="evidence" value="ECO:0007669"/>
    <property type="project" value="InterPro"/>
</dbReference>
<dbReference type="CDD" id="cd03260">
    <property type="entry name" value="ABC_PstB_phosphate_transporter"/>
    <property type="match status" value="1"/>
</dbReference>
<dbReference type="Gene3D" id="3.40.50.300">
    <property type="entry name" value="P-loop containing nucleotide triphosphate hydrolases"/>
    <property type="match status" value="1"/>
</dbReference>
<dbReference type="InterPro" id="IPR003593">
    <property type="entry name" value="AAA+_ATPase"/>
</dbReference>
<dbReference type="InterPro" id="IPR003439">
    <property type="entry name" value="ABC_transporter-like_ATP-bd"/>
</dbReference>
<dbReference type="InterPro" id="IPR017871">
    <property type="entry name" value="ABC_transporter-like_CS"/>
</dbReference>
<dbReference type="InterPro" id="IPR027417">
    <property type="entry name" value="P-loop_NTPase"/>
</dbReference>
<dbReference type="InterPro" id="IPR005670">
    <property type="entry name" value="PstB-like"/>
</dbReference>
<dbReference type="NCBIfam" id="TIGR00972">
    <property type="entry name" value="3a0107s01c2"/>
    <property type="match status" value="1"/>
</dbReference>
<dbReference type="PANTHER" id="PTHR43423">
    <property type="entry name" value="ABC TRANSPORTER I FAMILY MEMBER 17"/>
    <property type="match status" value="1"/>
</dbReference>
<dbReference type="PANTHER" id="PTHR43423:SF1">
    <property type="entry name" value="ABC TRANSPORTER I FAMILY MEMBER 17"/>
    <property type="match status" value="1"/>
</dbReference>
<dbReference type="Pfam" id="PF00005">
    <property type="entry name" value="ABC_tran"/>
    <property type="match status" value="1"/>
</dbReference>
<dbReference type="SMART" id="SM00382">
    <property type="entry name" value="AAA"/>
    <property type="match status" value="1"/>
</dbReference>
<dbReference type="SUPFAM" id="SSF52540">
    <property type="entry name" value="P-loop containing nucleoside triphosphate hydrolases"/>
    <property type="match status" value="1"/>
</dbReference>
<dbReference type="PROSITE" id="PS00211">
    <property type="entry name" value="ABC_TRANSPORTER_1"/>
    <property type="match status" value="1"/>
</dbReference>
<dbReference type="PROSITE" id="PS50893">
    <property type="entry name" value="ABC_TRANSPORTER_2"/>
    <property type="match status" value="1"/>
</dbReference>
<dbReference type="PROSITE" id="PS51238">
    <property type="entry name" value="PSTB"/>
    <property type="match status" value="1"/>
</dbReference>
<reference key="1">
    <citation type="journal article" date="2008" name="PLoS Genet.">
        <title>Complete genome sequence of the complex carbohydrate-degrading marine bacterium, Saccharophagus degradans strain 2-40 T.</title>
        <authorList>
            <person name="Weiner R.M."/>
            <person name="Taylor L.E. II"/>
            <person name="Henrissat B."/>
            <person name="Hauser L."/>
            <person name="Land M."/>
            <person name="Coutinho P.M."/>
            <person name="Rancurel C."/>
            <person name="Saunders E.H."/>
            <person name="Longmire A.G."/>
            <person name="Zhang H."/>
            <person name="Bayer E.A."/>
            <person name="Gilbert H.J."/>
            <person name="Larimer F."/>
            <person name="Zhulin I.B."/>
            <person name="Ekborg N.A."/>
            <person name="Lamed R."/>
            <person name="Richardson P.M."/>
            <person name="Borovok I."/>
            <person name="Hutcheson S."/>
        </authorList>
    </citation>
    <scope>NUCLEOTIDE SEQUENCE [LARGE SCALE GENOMIC DNA]</scope>
    <source>
        <strain>2-40 / ATCC 43961 / DSM 17024</strain>
    </source>
</reference>
<gene>
    <name evidence="1" type="primary">pstB</name>
    <name type="ordered locus">Sde_3752</name>
</gene>
<name>PSTB_SACD2</name>
<keyword id="KW-0067">ATP-binding</keyword>
<keyword id="KW-0997">Cell inner membrane</keyword>
<keyword id="KW-1003">Cell membrane</keyword>
<keyword id="KW-0472">Membrane</keyword>
<keyword id="KW-0547">Nucleotide-binding</keyword>
<keyword id="KW-0592">Phosphate transport</keyword>
<keyword id="KW-1185">Reference proteome</keyword>
<keyword id="KW-1278">Translocase</keyword>
<keyword id="KW-0813">Transport</keyword>
<sequence length="293" mass="32377">MTALDTLERVETAEIEKPIMQDKQIARGVEKITKTVGVPLTENAKFGIRGVDVFYGEKQAVFNVDLDIAKNQVIAMIGPSGCGKSTFLRCLNRMNDTIDICRVSGSITLDGMDIYDKQLDVVPLRARVGMVFQKPNPFPKSIYENVAYGPKIHGLASRRSDLDEIVETSLKKAGLWNEVKDRLHAPGTGLSGGQQQRLCIARTIAVSPEVILMDEPCSALDPIATAKIEELIAELSENFTIAIVTHSMQQAARVSHRTAYFHMGRLVEVNDTEKVFTNPDHELTEAYITGRFG</sequence>
<organism>
    <name type="scientific">Saccharophagus degradans (strain 2-40 / ATCC 43961 / DSM 17024)</name>
    <dbReference type="NCBI Taxonomy" id="203122"/>
    <lineage>
        <taxon>Bacteria</taxon>
        <taxon>Pseudomonadati</taxon>
        <taxon>Pseudomonadota</taxon>
        <taxon>Gammaproteobacteria</taxon>
        <taxon>Cellvibrionales</taxon>
        <taxon>Cellvibrionaceae</taxon>
        <taxon>Saccharophagus</taxon>
    </lineage>
</organism>
<comment type="function">
    <text evidence="1">Part of the ABC transporter complex PstSACB involved in phosphate import. Responsible for energy coupling to the transport system.</text>
</comment>
<comment type="catalytic activity">
    <reaction evidence="1">
        <text>phosphate(out) + ATP + H2O = ADP + 2 phosphate(in) + H(+)</text>
        <dbReference type="Rhea" id="RHEA:24440"/>
        <dbReference type="ChEBI" id="CHEBI:15377"/>
        <dbReference type="ChEBI" id="CHEBI:15378"/>
        <dbReference type="ChEBI" id="CHEBI:30616"/>
        <dbReference type="ChEBI" id="CHEBI:43474"/>
        <dbReference type="ChEBI" id="CHEBI:456216"/>
        <dbReference type="EC" id="7.3.2.1"/>
    </reaction>
</comment>
<comment type="subunit">
    <text evidence="1">The complex is composed of two ATP-binding proteins (PstB), two transmembrane proteins (PstC and PstA) and a solute-binding protein (PstS).</text>
</comment>
<comment type="subcellular location">
    <subcellularLocation>
        <location evidence="1">Cell inner membrane</location>
        <topology evidence="1">Peripheral membrane protein</topology>
    </subcellularLocation>
</comment>
<comment type="similarity">
    <text evidence="1">Belongs to the ABC transporter superfamily. Phosphate importer (TC 3.A.1.7) family.</text>
</comment>